<reference key="1">
    <citation type="journal article" date="1987" name="Mol. Gen. Genet.">
        <title>Expression of leucine genes from an extremely thermophilic bacterium in Escherichia coli.</title>
        <authorList>
            <person name="Croft J.E."/>
            <person name="Love D.R."/>
            <person name="Bergquist P.L."/>
        </authorList>
    </citation>
    <scope>NUCLEOTIDE SEQUENCE [GENOMIC DNA]</scope>
</reference>
<reference key="2">
    <citation type="submission" date="2004-11" db="EMBL/GenBank/DDBJ databases">
        <title>Complete genome sequence of Thermus thermophilus HB8.</title>
        <authorList>
            <person name="Masui R."/>
            <person name="Kurokawa K."/>
            <person name="Nakagawa N."/>
            <person name="Tokunaga F."/>
            <person name="Koyama Y."/>
            <person name="Shibata T."/>
            <person name="Oshima T."/>
            <person name="Yokoyama S."/>
            <person name="Yasunaga T."/>
            <person name="Kuramitsu S."/>
        </authorList>
    </citation>
    <scope>NUCLEOTIDE SEQUENCE [LARGE SCALE GENOMIC DNA]</scope>
    <source>
        <strain>ATCC 27634 / DSM 579 / HB8</strain>
    </source>
</reference>
<gene>
    <name type="ordered locus">TTHA1227.1</name>
</gene>
<proteinExistence type="predicted"/>
<name>LPL_THET8</name>
<comment type="function">
    <text>Involved in control of the biosynthesis of leucine.</text>
</comment>
<keyword id="KW-0028">Amino-acid biosynthesis</keyword>
<keyword id="KW-0100">Branched-chain amino acid biosynthesis</keyword>
<keyword id="KW-0428">Leader peptide</keyword>
<keyword id="KW-0432">Leucine biosynthesis</keyword>
<keyword id="KW-1185">Reference proteome</keyword>
<sequence>MRRAVILVLDRAGPV</sequence>
<dbReference type="EMBL" id="X06604">
    <property type="protein sequence ID" value="CAA29823.1"/>
    <property type="molecule type" value="Genomic_DNA"/>
</dbReference>
<dbReference type="EMBL" id="AP008226">
    <property type="status" value="NOT_ANNOTATED_CDS"/>
    <property type="molecule type" value="Genomic_DNA"/>
</dbReference>
<dbReference type="Proteomes" id="UP000000532">
    <property type="component" value="Chromosome"/>
</dbReference>
<dbReference type="GO" id="GO:0009098">
    <property type="term" value="P:L-leucine biosynthetic process"/>
    <property type="evidence" value="ECO:0007669"/>
    <property type="project" value="UniProtKB-KW"/>
</dbReference>
<protein>
    <recommendedName>
        <fullName>leu operon leader peptide</fullName>
    </recommendedName>
    <alternativeName>
        <fullName>leu operon attenuator peptide</fullName>
    </alternativeName>
</protein>
<organism>
    <name type="scientific">Thermus thermophilus (strain ATCC 27634 / DSM 579 / HB8)</name>
    <dbReference type="NCBI Taxonomy" id="300852"/>
    <lineage>
        <taxon>Bacteria</taxon>
        <taxon>Thermotogati</taxon>
        <taxon>Deinococcota</taxon>
        <taxon>Deinococci</taxon>
        <taxon>Thermales</taxon>
        <taxon>Thermaceae</taxon>
        <taxon>Thermus</taxon>
    </lineage>
</organism>
<feature type="peptide" id="PRO_0000044001" description="leu operon leader peptide">
    <location>
        <begin position="1"/>
        <end position="15"/>
    </location>
</feature>
<accession>P21234</accession>